<organism>
    <name type="scientific">Mycobacterium tuberculosis (strain ATCC 25618 / H37Rv)</name>
    <dbReference type="NCBI Taxonomy" id="83332"/>
    <lineage>
        <taxon>Bacteria</taxon>
        <taxon>Bacillati</taxon>
        <taxon>Actinomycetota</taxon>
        <taxon>Actinomycetes</taxon>
        <taxon>Mycobacteriales</taxon>
        <taxon>Mycobacteriaceae</taxon>
        <taxon>Mycobacterium</taxon>
        <taxon>Mycobacterium tuberculosis complex</taxon>
    </lineage>
</organism>
<reference key="1">
    <citation type="journal article" date="1998" name="Nature">
        <title>Deciphering the biology of Mycobacterium tuberculosis from the complete genome sequence.</title>
        <authorList>
            <person name="Cole S.T."/>
            <person name="Brosch R."/>
            <person name="Parkhill J."/>
            <person name="Garnier T."/>
            <person name="Churcher C.M."/>
            <person name="Harris D.E."/>
            <person name="Gordon S.V."/>
            <person name="Eiglmeier K."/>
            <person name="Gas S."/>
            <person name="Barry C.E. III"/>
            <person name="Tekaia F."/>
            <person name="Badcock K."/>
            <person name="Basham D."/>
            <person name="Brown D."/>
            <person name="Chillingworth T."/>
            <person name="Connor R."/>
            <person name="Davies R.M."/>
            <person name="Devlin K."/>
            <person name="Feltwell T."/>
            <person name="Gentles S."/>
            <person name="Hamlin N."/>
            <person name="Holroyd S."/>
            <person name="Hornsby T."/>
            <person name="Jagels K."/>
            <person name="Krogh A."/>
            <person name="McLean J."/>
            <person name="Moule S."/>
            <person name="Murphy L.D."/>
            <person name="Oliver S."/>
            <person name="Osborne J."/>
            <person name="Quail M.A."/>
            <person name="Rajandream M.A."/>
            <person name="Rogers J."/>
            <person name="Rutter S."/>
            <person name="Seeger K."/>
            <person name="Skelton S."/>
            <person name="Squares S."/>
            <person name="Squares R."/>
            <person name="Sulston J.E."/>
            <person name="Taylor K."/>
            <person name="Whitehead S."/>
            <person name="Barrell B.G."/>
        </authorList>
    </citation>
    <scope>NUCLEOTIDE SEQUENCE [LARGE SCALE GENOMIC DNA]</scope>
    <source>
        <strain>ATCC 25618 / H37Rv</strain>
    </source>
</reference>
<reference key="2">
    <citation type="journal article" date="2011" name="BMC Genomics">
        <title>Bioinformatic evidence for a widely distributed, ribosomally produced electron carrier precursor, its maturation proteins, and its nicotinoprotein redox partners.</title>
        <authorList>
            <person name="Haft D.H."/>
        </authorList>
    </citation>
    <scope>POSSIBLE FUNCTION</scope>
    <source>
        <strain>ATCC 25618 / H37Rv</strain>
    </source>
</reference>
<reference key="3">
    <citation type="journal article" date="2011" name="Mol. Cell. Proteomics">
        <title>Proteogenomic analysis of Mycobacterium tuberculosis by high resolution mass spectrometry.</title>
        <authorList>
            <person name="Kelkar D.S."/>
            <person name="Kumar D."/>
            <person name="Kumar P."/>
            <person name="Balakrishnan L."/>
            <person name="Muthusamy B."/>
            <person name="Yadav A.K."/>
            <person name="Shrivastava P."/>
            <person name="Marimuthu A."/>
            <person name="Anand S."/>
            <person name="Sundaram H."/>
            <person name="Kingsbury R."/>
            <person name="Harsha H.C."/>
            <person name="Nair B."/>
            <person name="Prasad T.S."/>
            <person name="Chauhan D.S."/>
            <person name="Katoch K."/>
            <person name="Katoch V.M."/>
            <person name="Kumar P."/>
            <person name="Chaerkady R."/>
            <person name="Ramachandran S."/>
            <person name="Dash D."/>
            <person name="Pandey A."/>
        </authorList>
    </citation>
    <scope>IDENTIFICATION BY MASS SPECTROMETRY [LARGE SCALE ANALYSIS]</scope>
    <source>
        <strain>ATCC 25618 / H37Rv</strain>
    </source>
</reference>
<accession>P9WP59</accession>
<accession>L0T678</accession>
<accession>P95041</accession>
<accession>Q7D9E8</accession>
<proteinExistence type="evidence at protein level"/>
<protein>
    <recommendedName>
        <fullName>Mycofactocin precursor peptide peptidase</fullName>
        <ecNumber evidence="1">3.4.14.14</ecNumber>
    </recommendedName>
</protein>
<comment type="function">
    <text evidence="1">Peptidase involved in the biosynthesis of the enzyme cofactor mycofactocin (MFT). Catalyzes cleavage of the MftC-modified MftA peptide to liberate its final two residues, which consist of a cross-linked valine-decarboxylated tyrosine dipeptide (named 3-amino-5-[(4-hydroxyphenyl)methyl]-4,4-dimethyl-2-pyrrolidin-2-one or ADHP).</text>
</comment>
<comment type="catalytic activity">
    <reaction evidence="1">
        <text>[mycofactocin precursor peptide]-C-terminal glycyl-N-{5-[(4-hydroxyphenyl)methyl]-4,4-dimethyl-2-oxopyrrolidin-3-yl}acetamide + H2O = [mycofactocin precursor peptide]-C-terminal glycine + 3-amino-5-[(4-hydroxyphenyl)methyl]-4,4-dimethyl-2-pyrrolidin-2-one</text>
        <dbReference type="Rhea" id="RHEA:65504"/>
        <dbReference type="Rhea" id="RHEA-COMP:16818"/>
        <dbReference type="Rhea" id="RHEA-COMP:16819"/>
        <dbReference type="ChEBI" id="CHEBI:15377"/>
        <dbReference type="ChEBI" id="CHEBI:83148"/>
        <dbReference type="ChEBI" id="CHEBI:150863"/>
        <dbReference type="ChEBI" id="CHEBI:156518"/>
        <dbReference type="EC" id="3.4.14.14"/>
    </reaction>
</comment>
<comment type="cofactor">
    <cofactor evidence="1">
        <name>Fe(2+)</name>
        <dbReference type="ChEBI" id="CHEBI:29033"/>
    </cofactor>
    <text evidence="1">MftE appears to bind one Fe(2+) and one Zn(2+) ion per subunit. Fe(2+) seems to be catalytically active while Zn(2+) could play an auxiliary role.</text>
</comment>
<comment type="cofactor">
    <cofactor evidence="1">
        <name>Zn(2+)</name>
        <dbReference type="ChEBI" id="CHEBI:29105"/>
    </cofactor>
</comment>
<comment type="subunit">
    <text evidence="1">Homooctamer.</text>
</comment>
<comment type="similarity">
    <text evidence="4">Belongs to the creatininase superfamily.</text>
</comment>
<name>MFTE_MYCTU</name>
<evidence type="ECO:0000250" key="1">
    <source>
        <dbReference type="UniProtKB" id="A0PM51"/>
    </source>
</evidence>
<evidence type="ECO:0000250" key="2">
    <source>
        <dbReference type="UniProtKB" id="P83772"/>
    </source>
</evidence>
<evidence type="ECO:0000303" key="3">
    <source>
    </source>
</evidence>
<evidence type="ECO:0000305" key="4"/>
<dbReference type="EC" id="3.4.14.14" evidence="1"/>
<dbReference type="EMBL" id="AL123456">
    <property type="protein sequence ID" value="CCP43439.1"/>
    <property type="molecule type" value="Genomic_DNA"/>
</dbReference>
<dbReference type="PIR" id="B70641">
    <property type="entry name" value="B70641"/>
</dbReference>
<dbReference type="RefSeq" id="NP_215209.1">
    <property type="nucleotide sequence ID" value="NC_000962.3"/>
</dbReference>
<dbReference type="RefSeq" id="WP_003403497.1">
    <property type="nucleotide sequence ID" value="NZ_NVQJ01000007.1"/>
</dbReference>
<dbReference type="SMR" id="P9WP59"/>
<dbReference type="STRING" id="83332.Rv0695"/>
<dbReference type="PaxDb" id="83332-Rv0695"/>
<dbReference type="DNASU" id="888314"/>
<dbReference type="GeneID" id="45424659"/>
<dbReference type="GeneID" id="888314"/>
<dbReference type="KEGG" id="mtu:Rv0695"/>
<dbReference type="KEGG" id="mtv:RVBD_0695"/>
<dbReference type="TubercuList" id="Rv0695"/>
<dbReference type="eggNOG" id="COG1402">
    <property type="taxonomic scope" value="Bacteria"/>
</dbReference>
<dbReference type="InParanoid" id="P9WP59"/>
<dbReference type="OrthoDB" id="9801445at2"/>
<dbReference type="PhylomeDB" id="P9WP59"/>
<dbReference type="BRENDA" id="3.4.14.14">
    <property type="organism ID" value="3445"/>
</dbReference>
<dbReference type="Proteomes" id="UP000001584">
    <property type="component" value="Chromosome"/>
</dbReference>
<dbReference type="GO" id="GO:0016811">
    <property type="term" value="F:hydrolase activity, acting on carbon-nitrogen (but not peptide) bonds, in linear amides"/>
    <property type="evidence" value="ECO:0000318"/>
    <property type="project" value="GO_Central"/>
</dbReference>
<dbReference type="GO" id="GO:0046872">
    <property type="term" value="F:metal ion binding"/>
    <property type="evidence" value="ECO:0007669"/>
    <property type="project" value="UniProtKB-KW"/>
</dbReference>
<dbReference type="GO" id="GO:0008233">
    <property type="term" value="F:peptidase activity"/>
    <property type="evidence" value="ECO:0007669"/>
    <property type="project" value="UniProtKB-KW"/>
</dbReference>
<dbReference type="GO" id="GO:0006508">
    <property type="term" value="P:proteolysis"/>
    <property type="evidence" value="ECO:0007669"/>
    <property type="project" value="UniProtKB-KW"/>
</dbReference>
<dbReference type="GO" id="GO:0009231">
    <property type="term" value="P:riboflavin biosynthetic process"/>
    <property type="evidence" value="ECO:0000318"/>
    <property type="project" value="GO_Central"/>
</dbReference>
<dbReference type="Gene3D" id="3.40.50.10310">
    <property type="entry name" value="Creatininase"/>
    <property type="match status" value="1"/>
</dbReference>
<dbReference type="InterPro" id="IPR024087">
    <property type="entry name" value="Creatininase-like_sf"/>
</dbReference>
<dbReference type="InterPro" id="IPR003785">
    <property type="entry name" value="Creatininase/forma_Hydrolase"/>
</dbReference>
<dbReference type="InterPro" id="IPR023871">
    <property type="entry name" value="MftE"/>
</dbReference>
<dbReference type="NCBIfam" id="TIGR03964">
    <property type="entry name" value="mycofact_creat"/>
    <property type="match status" value="1"/>
</dbReference>
<dbReference type="PANTHER" id="PTHR35005:SF1">
    <property type="entry name" value="2-AMINO-5-FORMYLAMINO-6-RIBOSYLAMINOPYRIMIDIN-4(3H)-ONE 5'-MONOPHOSPHATE DEFORMYLASE"/>
    <property type="match status" value="1"/>
</dbReference>
<dbReference type="PANTHER" id="PTHR35005">
    <property type="entry name" value="3-DEHYDRO-SCYLLO-INOSOSE HYDROLASE"/>
    <property type="match status" value="1"/>
</dbReference>
<dbReference type="Pfam" id="PF02633">
    <property type="entry name" value="Creatininase"/>
    <property type="match status" value="1"/>
</dbReference>
<dbReference type="SUPFAM" id="SSF102215">
    <property type="entry name" value="Creatininase"/>
    <property type="match status" value="1"/>
</dbReference>
<gene>
    <name evidence="3" type="primary">mftE</name>
    <name type="ordered locus">Rv0695</name>
</gene>
<sequence length="251" mass="26580">MNSSYHRRVPVVGELGSATSSQLPSTSPSIVIPLGSTEQHGPHLPLDTDTRIATAVARTVTARLHAEDLPIAQEEWLMAPAIAYGASGEHQRFAGTISIGTEALTMLLVEYGRSAACWARRLVFVNGHGGNVGALTRAVGLLRAEGRDAGWCPCTCPGGDPHAGHTETSVLLHLSPADVRTERWRAGNRAPLPVLLPSMRRGGVAAVSETGVLGDPTTATAAEGRRIFAAMVDDCVRRVARWMPQPDGMLT</sequence>
<feature type="chain" id="PRO_0000415279" description="Mycofactocin precursor peptide peptidase">
    <location>
        <begin position="1"/>
        <end position="251"/>
    </location>
</feature>
<feature type="binding site" evidence="2">
    <location>
        <position position="38"/>
    </location>
    <ligand>
        <name>a divalent metal cation</name>
        <dbReference type="ChEBI" id="CHEBI:60240"/>
        <label>1</label>
    </ligand>
</feature>
<feature type="binding site" evidence="2">
    <location>
        <position position="40"/>
    </location>
    <ligand>
        <name>a divalent metal cation</name>
        <dbReference type="ChEBI" id="CHEBI:60240"/>
        <label>2</label>
    </ligand>
</feature>
<feature type="binding site" evidence="2">
    <location>
        <position position="49"/>
    </location>
    <ligand>
        <name>a divalent metal cation</name>
        <dbReference type="ChEBI" id="CHEBI:60240"/>
        <label>1</label>
    </ligand>
</feature>
<feature type="binding site" evidence="2">
    <location>
        <position position="49"/>
    </location>
    <ligand>
        <name>a divalent metal cation</name>
        <dbReference type="ChEBI" id="CHEBI:60240"/>
        <label>2</label>
    </ligand>
</feature>
<feature type="binding site" evidence="2">
    <location>
        <position position="128"/>
    </location>
    <ligand>
        <name>a divalent metal cation</name>
        <dbReference type="ChEBI" id="CHEBI:60240"/>
        <label>1</label>
    </ligand>
</feature>
<feature type="binding site" evidence="2">
    <location>
        <position position="167"/>
    </location>
    <ligand>
        <name>a divalent metal cation</name>
        <dbReference type="ChEBI" id="CHEBI:60240"/>
        <label>2</label>
    </ligand>
</feature>
<keyword id="KW-0378">Hydrolase</keyword>
<keyword id="KW-0408">Iron</keyword>
<keyword id="KW-0479">Metal-binding</keyword>
<keyword id="KW-0645">Protease</keyword>
<keyword id="KW-1185">Reference proteome</keyword>
<keyword id="KW-0862">Zinc</keyword>